<protein>
    <recommendedName>
        <fullName>Probable nitrogen assimilation transcriptional activator</fullName>
    </recommendedName>
</protein>
<comment type="function">
    <text evidence="1">Seems to regulate utilization of fixed nitrogen by controlling the expression of a certain gene(s) involved in nitrogen metabolism.</text>
</comment>
<comment type="similarity">
    <text evidence="3">Belongs to the LysR transcriptional regulatory family.</text>
</comment>
<dbReference type="EMBL" id="BA000022">
    <property type="protein sequence ID" value="BAA18522.1"/>
    <property type="molecule type" value="Genomic_DNA"/>
</dbReference>
<dbReference type="PIR" id="S76393">
    <property type="entry name" value="S76393"/>
</dbReference>
<dbReference type="SMR" id="P74422"/>
<dbReference type="STRING" id="1148.gene:10499403"/>
<dbReference type="PaxDb" id="1148-1653610"/>
<dbReference type="EnsemblBacteria" id="BAA18522">
    <property type="protein sequence ID" value="BAA18522"/>
    <property type="gene ID" value="BAA18522"/>
</dbReference>
<dbReference type="KEGG" id="syn:slr0395"/>
<dbReference type="eggNOG" id="COG0583">
    <property type="taxonomic scope" value="Bacteria"/>
</dbReference>
<dbReference type="InParanoid" id="P74422"/>
<dbReference type="PhylomeDB" id="P74422"/>
<dbReference type="Proteomes" id="UP000001425">
    <property type="component" value="Chromosome"/>
</dbReference>
<dbReference type="GO" id="GO:0005829">
    <property type="term" value="C:cytosol"/>
    <property type="evidence" value="ECO:0000318"/>
    <property type="project" value="GO_Central"/>
</dbReference>
<dbReference type="GO" id="GO:0003700">
    <property type="term" value="F:DNA-binding transcription factor activity"/>
    <property type="evidence" value="ECO:0007669"/>
    <property type="project" value="InterPro"/>
</dbReference>
<dbReference type="GO" id="GO:0043565">
    <property type="term" value="F:sequence-specific DNA binding"/>
    <property type="evidence" value="ECO:0000318"/>
    <property type="project" value="GO_Central"/>
</dbReference>
<dbReference type="GO" id="GO:0006355">
    <property type="term" value="P:regulation of DNA-templated transcription"/>
    <property type="evidence" value="ECO:0000318"/>
    <property type="project" value="GO_Central"/>
</dbReference>
<dbReference type="CDD" id="cd05466">
    <property type="entry name" value="PBP2_LTTR_substrate"/>
    <property type="match status" value="1"/>
</dbReference>
<dbReference type="FunFam" id="1.10.10.10:FF:000001">
    <property type="entry name" value="LysR family transcriptional regulator"/>
    <property type="match status" value="1"/>
</dbReference>
<dbReference type="Gene3D" id="3.40.190.290">
    <property type="match status" value="1"/>
</dbReference>
<dbReference type="Gene3D" id="1.10.10.10">
    <property type="entry name" value="Winged helix-like DNA-binding domain superfamily/Winged helix DNA-binding domain"/>
    <property type="match status" value="1"/>
</dbReference>
<dbReference type="InterPro" id="IPR050950">
    <property type="entry name" value="HTH-type_LysR_regulators"/>
</dbReference>
<dbReference type="InterPro" id="IPR005119">
    <property type="entry name" value="LysR_subst-bd"/>
</dbReference>
<dbReference type="InterPro" id="IPR000847">
    <property type="entry name" value="Tscrpt_reg_HTH_LysR"/>
</dbReference>
<dbReference type="InterPro" id="IPR036388">
    <property type="entry name" value="WH-like_DNA-bd_sf"/>
</dbReference>
<dbReference type="InterPro" id="IPR036390">
    <property type="entry name" value="WH_DNA-bd_sf"/>
</dbReference>
<dbReference type="PANTHER" id="PTHR30419">
    <property type="entry name" value="HTH-TYPE TRANSCRIPTIONAL REGULATOR YBHD"/>
    <property type="match status" value="1"/>
</dbReference>
<dbReference type="PANTHER" id="PTHR30419:SF8">
    <property type="entry name" value="NITROGEN ASSIMILATION TRANSCRIPTIONAL ACTIVATOR-RELATED"/>
    <property type="match status" value="1"/>
</dbReference>
<dbReference type="Pfam" id="PF00126">
    <property type="entry name" value="HTH_1"/>
    <property type="match status" value="1"/>
</dbReference>
<dbReference type="Pfam" id="PF03466">
    <property type="entry name" value="LysR_substrate"/>
    <property type="match status" value="1"/>
</dbReference>
<dbReference type="SUPFAM" id="SSF53850">
    <property type="entry name" value="Periplasmic binding protein-like II"/>
    <property type="match status" value="1"/>
</dbReference>
<dbReference type="SUPFAM" id="SSF46785">
    <property type="entry name" value="Winged helix' DNA-binding domain"/>
    <property type="match status" value="1"/>
</dbReference>
<dbReference type="PROSITE" id="PS50931">
    <property type="entry name" value="HTH_LYSR"/>
    <property type="match status" value="1"/>
</dbReference>
<organism>
    <name type="scientific">Synechocystis sp. (strain ATCC 27184 / PCC 6803 / Kazusa)</name>
    <dbReference type="NCBI Taxonomy" id="1111708"/>
    <lineage>
        <taxon>Bacteria</taxon>
        <taxon>Bacillati</taxon>
        <taxon>Cyanobacteriota</taxon>
        <taxon>Cyanophyceae</taxon>
        <taxon>Synechococcales</taxon>
        <taxon>Merismopediaceae</taxon>
        <taxon>Synechocystis</taxon>
    </lineage>
</organism>
<evidence type="ECO:0000250" key="1"/>
<evidence type="ECO:0000255" key="2">
    <source>
        <dbReference type="PROSITE-ProRule" id="PRU00253"/>
    </source>
</evidence>
<evidence type="ECO:0000305" key="3"/>
<feature type="chain" id="PRO_0000105726" description="Probable nitrogen assimilation transcriptional activator">
    <location>
        <begin position="1"/>
        <end position="309"/>
    </location>
</feature>
<feature type="domain" description="HTH lysR-type" evidence="2">
    <location>
        <begin position="1"/>
        <end position="57"/>
    </location>
</feature>
<feature type="DNA-binding region" description="H-T-H motif" evidence="2">
    <location>
        <begin position="18"/>
        <end position="38"/>
    </location>
</feature>
<proteinExistence type="inferred from homology"/>
<name>NTCB_SYNY3</name>
<keyword id="KW-0010">Activator</keyword>
<keyword id="KW-0238">DNA-binding</keyword>
<keyword id="KW-1185">Reference proteome</keyword>
<keyword id="KW-0804">Transcription</keyword>
<keyword id="KW-0805">Transcription regulation</keyword>
<accession>P74422</accession>
<gene>
    <name type="primary">ntcB</name>
    <name type="ordered locus">slr0395</name>
</gene>
<sequence>MRLEQLQAFLKVAELGSFQQAALQSEVTQSTISRQIQGLESALKCQLFHRGAQAKLTVAGELFLRRARKICQEWDVASEEISSLFQGKQTELCVAAIHSVCVSSLPSLLPKFCLGHPQIQLRVTALGSDRALKVLQDGLVDVAIIMSHRNLTNTKELAIKPLYEEQICILMASDHPLTTKKFITWENLGPYPQVIFKDGYRMRRLVEDEFSRREIPLNVSLELNIPEAFYGVVQGSEMIALMPQSLVTPVIDNPNFSVRYLFCPESGDRQDFRRQVSVVTTVDRLQIPPVAEFFNLVVDHYRCGALTVK</sequence>
<reference key="1">
    <citation type="journal article" date="1996" name="DNA Res.">
        <title>Sequence analysis of the genome of the unicellular cyanobacterium Synechocystis sp. strain PCC6803. II. Sequence determination of the entire genome and assignment of potential protein-coding regions.</title>
        <authorList>
            <person name="Kaneko T."/>
            <person name="Sato S."/>
            <person name="Kotani H."/>
            <person name="Tanaka A."/>
            <person name="Asamizu E."/>
            <person name="Nakamura Y."/>
            <person name="Miyajima N."/>
            <person name="Hirosawa M."/>
            <person name="Sugiura M."/>
            <person name="Sasamoto S."/>
            <person name="Kimura T."/>
            <person name="Hosouchi T."/>
            <person name="Matsuno A."/>
            <person name="Muraki A."/>
            <person name="Nakazaki N."/>
            <person name="Naruo K."/>
            <person name="Okumura S."/>
            <person name="Shimpo S."/>
            <person name="Takeuchi C."/>
            <person name="Wada T."/>
            <person name="Watanabe A."/>
            <person name="Yamada M."/>
            <person name="Yasuda M."/>
            <person name="Tabata S."/>
        </authorList>
    </citation>
    <scope>NUCLEOTIDE SEQUENCE [LARGE SCALE GENOMIC DNA]</scope>
    <source>
        <strain>ATCC 27184 / PCC 6803 / Kazusa</strain>
    </source>
</reference>